<name>ATPE_BURMS</name>
<feature type="chain" id="PRO_1000056462" description="ATP synthase epsilon chain">
    <location>
        <begin position="1"/>
        <end position="141"/>
    </location>
</feature>
<proteinExistence type="inferred from homology"/>
<accession>A1V8T0</accession>
<dbReference type="EMBL" id="CP000526">
    <property type="protein sequence ID" value="ABM50148.1"/>
    <property type="molecule type" value="Genomic_DNA"/>
</dbReference>
<dbReference type="RefSeq" id="WP_004195832.1">
    <property type="nucleotide sequence ID" value="NC_008785.1"/>
</dbReference>
<dbReference type="SMR" id="A1V8T0"/>
<dbReference type="KEGG" id="bmv:BMASAVP1_A3354"/>
<dbReference type="HOGENOM" id="CLU_084338_2_0_4"/>
<dbReference type="GO" id="GO:0005886">
    <property type="term" value="C:plasma membrane"/>
    <property type="evidence" value="ECO:0007669"/>
    <property type="project" value="UniProtKB-SubCell"/>
</dbReference>
<dbReference type="GO" id="GO:0045259">
    <property type="term" value="C:proton-transporting ATP synthase complex"/>
    <property type="evidence" value="ECO:0007669"/>
    <property type="project" value="UniProtKB-KW"/>
</dbReference>
<dbReference type="GO" id="GO:0005524">
    <property type="term" value="F:ATP binding"/>
    <property type="evidence" value="ECO:0007669"/>
    <property type="project" value="UniProtKB-UniRule"/>
</dbReference>
<dbReference type="GO" id="GO:0046933">
    <property type="term" value="F:proton-transporting ATP synthase activity, rotational mechanism"/>
    <property type="evidence" value="ECO:0007669"/>
    <property type="project" value="UniProtKB-UniRule"/>
</dbReference>
<dbReference type="CDD" id="cd12152">
    <property type="entry name" value="F1-ATPase_delta"/>
    <property type="match status" value="1"/>
</dbReference>
<dbReference type="FunFam" id="2.60.15.10:FF:000001">
    <property type="entry name" value="ATP synthase epsilon chain"/>
    <property type="match status" value="1"/>
</dbReference>
<dbReference type="Gene3D" id="1.20.5.440">
    <property type="entry name" value="ATP synthase delta/epsilon subunit, C-terminal domain"/>
    <property type="match status" value="1"/>
</dbReference>
<dbReference type="Gene3D" id="2.60.15.10">
    <property type="entry name" value="F0F1 ATP synthase delta/epsilon subunit, N-terminal"/>
    <property type="match status" value="1"/>
</dbReference>
<dbReference type="HAMAP" id="MF_00530">
    <property type="entry name" value="ATP_synth_epsil_bac"/>
    <property type="match status" value="1"/>
</dbReference>
<dbReference type="InterPro" id="IPR036794">
    <property type="entry name" value="ATP_F1_dsu/esu_C_sf"/>
</dbReference>
<dbReference type="InterPro" id="IPR001469">
    <property type="entry name" value="ATP_synth_F1_dsu/esu"/>
</dbReference>
<dbReference type="InterPro" id="IPR020546">
    <property type="entry name" value="ATP_synth_F1_dsu/esu_N"/>
</dbReference>
<dbReference type="InterPro" id="IPR020547">
    <property type="entry name" value="ATP_synth_F1_esu_C"/>
</dbReference>
<dbReference type="InterPro" id="IPR036771">
    <property type="entry name" value="ATPsynth_dsu/esu_N"/>
</dbReference>
<dbReference type="NCBIfam" id="TIGR01216">
    <property type="entry name" value="ATP_synt_epsi"/>
    <property type="match status" value="1"/>
</dbReference>
<dbReference type="NCBIfam" id="NF001847">
    <property type="entry name" value="PRK00571.1-4"/>
    <property type="match status" value="1"/>
</dbReference>
<dbReference type="PANTHER" id="PTHR13822">
    <property type="entry name" value="ATP SYNTHASE DELTA/EPSILON CHAIN"/>
    <property type="match status" value="1"/>
</dbReference>
<dbReference type="PANTHER" id="PTHR13822:SF10">
    <property type="entry name" value="ATP SYNTHASE EPSILON CHAIN, CHLOROPLASTIC"/>
    <property type="match status" value="1"/>
</dbReference>
<dbReference type="Pfam" id="PF00401">
    <property type="entry name" value="ATP-synt_DE"/>
    <property type="match status" value="1"/>
</dbReference>
<dbReference type="Pfam" id="PF02823">
    <property type="entry name" value="ATP-synt_DE_N"/>
    <property type="match status" value="1"/>
</dbReference>
<dbReference type="SUPFAM" id="SSF46604">
    <property type="entry name" value="Epsilon subunit of F1F0-ATP synthase C-terminal domain"/>
    <property type="match status" value="1"/>
</dbReference>
<dbReference type="SUPFAM" id="SSF51344">
    <property type="entry name" value="Epsilon subunit of F1F0-ATP synthase N-terminal domain"/>
    <property type="match status" value="1"/>
</dbReference>
<gene>
    <name evidence="1" type="primary">atpC</name>
    <name type="ordered locus">BMASAVP1_A3354</name>
</gene>
<evidence type="ECO:0000255" key="1">
    <source>
        <dbReference type="HAMAP-Rule" id="MF_00530"/>
    </source>
</evidence>
<sequence>MATIKVDVVSAEEQIFSGQAKFVALPGEAGELGILPGHTPLITRIRPGAVRIESESGDEEFVFVAGGILEVQPGAVTVLADTAIRGKDLDAAKAEEARKRAEETLQNAKSDIDLAKAQSELATAMAQLEAIQRLAKIRGKH</sequence>
<keyword id="KW-0066">ATP synthesis</keyword>
<keyword id="KW-0997">Cell inner membrane</keyword>
<keyword id="KW-1003">Cell membrane</keyword>
<keyword id="KW-0139">CF(1)</keyword>
<keyword id="KW-0375">Hydrogen ion transport</keyword>
<keyword id="KW-0406">Ion transport</keyword>
<keyword id="KW-0472">Membrane</keyword>
<keyword id="KW-0813">Transport</keyword>
<organism>
    <name type="scientific">Burkholderia mallei (strain SAVP1)</name>
    <dbReference type="NCBI Taxonomy" id="320388"/>
    <lineage>
        <taxon>Bacteria</taxon>
        <taxon>Pseudomonadati</taxon>
        <taxon>Pseudomonadota</taxon>
        <taxon>Betaproteobacteria</taxon>
        <taxon>Burkholderiales</taxon>
        <taxon>Burkholderiaceae</taxon>
        <taxon>Burkholderia</taxon>
        <taxon>pseudomallei group</taxon>
    </lineage>
</organism>
<reference key="1">
    <citation type="journal article" date="2010" name="Genome Biol. Evol.">
        <title>Continuing evolution of Burkholderia mallei through genome reduction and large-scale rearrangements.</title>
        <authorList>
            <person name="Losada L."/>
            <person name="Ronning C.M."/>
            <person name="DeShazer D."/>
            <person name="Woods D."/>
            <person name="Fedorova N."/>
            <person name="Kim H.S."/>
            <person name="Shabalina S.A."/>
            <person name="Pearson T.R."/>
            <person name="Brinkac L."/>
            <person name="Tan P."/>
            <person name="Nandi T."/>
            <person name="Crabtree J."/>
            <person name="Badger J."/>
            <person name="Beckstrom-Sternberg S."/>
            <person name="Saqib M."/>
            <person name="Schutzer S.E."/>
            <person name="Keim P."/>
            <person name="Nierman W.C."/>
        </authorList>
    </citation>
    <scope>NUCLEOTIDE SEQUENCE [LARGE SCALE GENOMIC DNA]</scope>
    <source>
        <strain>SAVP1</strain>
    </source>
</reference>
<protein>
    <recommendedName>
        <fullName evidence="1">ATP synthase epsilon chain</fullName>
    </recommendedName>
    <alternativeName>
        <fullName evidence="1">ATP synthase F1 sector epsilon subunit</fullName>
    </alternativeName>
    <alternativeName>
        <fullName evidence="1">F-ATPase epsilon subunit</fullName>
    </alternativeName>
</protein>
<comment type="function">
    <text evidence="1">Produces ATP from ADP in the presence of a proton gradient across the membrane.</text>
</comment>
<comment type="subunit">
    <text evidence="1">F-type ATPases have 2 components, CF(1) - the catalytic core - and CF(0) - the membrane proton channel. CF(1) has five subunits: alpha(3), beta(3), gamma(1), delta(1), epsilon(1). CF(0) has three main subunits: a, b and c.</text>
</comment>
<comment type="subcellular location">
    <subcellularLocation>
        <location evidence="1">Cell inner membrane</location>
        <topology evidence="1">Peripheral membrane protein</topology>
    </subcellularLocation>
</comment>
<comment type="similarity">
    <text evidence="1">Belongs to the ATPase epsilon chain family.</text>
</comment>